<name>COX1_HETCH</name>
<comment type="function">
    <text evidence="3">Component of the cytochrome c oxidase, the last enzyme in the mitochondrial electron transport chain which drives oxidative phosphorylation. The respiratory chain contains 3 multisubunit complexes succinate dehydrogenase (complex II, CII), ubiquinol-cytochrome c oxidoreductase (cytochrome b-c1 complex, complex III, CIII) and cytochrome c oxidase (complex IV, CIV), that cooperate to transfer electrons derived from NADH and succinate to molecular oxygen, creating an electrochemical gradient over the inner membrane that drives transmembrane transport and the ATP synthase. Cytochrome c oxidase is the component of the respiratory chain that catalyzes the reduction of oxygen to water. Electrons originating from reduced cytochrome c in the intermembrane space (IMS) are transferred via the dinuclear copper A center (CU(A)) of subunit 2 and heme A of subunit 1 to the active site in subunit 1, a binuclear center (BNC) formed by heme A3 and copper B (CU(B)). The BNC reduces molecular oxygen to 2 water molecules using 4 electrons from cytochrome c in the IMS and 4 protons from the mitochondrial matrix.</text>
</comment>
<comment type="catalytic activity">
    <reaction evidence="3">
        <text>4 Fe(II)-[cytochrome c] + O2 + 8 H(+)(in) = 4 Fe(III)-[cytochrome c] + 2 H2O + 4 H(+)(out)</text>
        <dbReference type="Rhea" id="RHEA:11436"/>
        <dbReference type="Rhea" id="RHEA-COMP:10350"/>
        <dbReference type="Rhea" id="RHEA-COMP:14399"/>
        <dbReference type="ChEBI" id="CHEBI:15377"/>
        <dbReference type="ChEBI" id="CHEBI:15378"/>
        <dbReference type="ChEBI" id="CHEBI:15379"/>
        <dbReference type="ChEBI" id="CHEBI:29033"/>
        <dbReference type="ChEBI" id="CHEBI:29034"/>
        <dbReference type="EC" id="7.1.1.9"/>
    </reaction>
    <physiologicalReaction direction="left-to-right" evidence="3">
        <dbReference type="Rhea" id="RHEA:11437"/>
    </physiologicalReaction>
</comment>
<comment type="cofactor">
    <cofactor evidence="2">
        <name>heme</name>
        <dbReference type="ChEBI" id="CHEBI:30413"/>
    </cofactor>
    <text evidence="2">Binds 2 heme A groups non-covalently per subunit.</text>
</comment>
<comment type="cofactor">
    <cofactor evidence="2">
        <name>Cu cation</name>
        <dbReference type="ChEBI" id="CHEBI:23378"/>
    </cofactor>
    <text evidence="2">Binds a copper B center.</text>
</comment>
<comment type="pathway">
    <text evidence="3">Energy metabolism; oxidative phosphorylation.</text>
</comment>
<comment type="subunit">
    <text evidence="1 2">Component of the cytochrome c oxidase (complex IV, CIV), a multisubunit enzyme composed of 14 subunits. The complex is composed of a catalytic core of 3 subunits MT-CO1, MT-CO2 and MT-CO3, encoded in the mitochondrial DNA, and 11 supernumerary subunits COX4I, COX5A, COX5B, COX6A, COX6B, COX6C, COX7A, COX7B, COX7C, COX8 and NDUFA4, which are encoded in the nuclear genome. The complex exists as a monomer or a dimer and forms supercomplexes (SCs) in the inner mitochondrial membrane with NADH-ubiquinone oxidoreductase (complex I, CI) and ubiquinol-cytochrome c oxidoreductase (cytochrome b-c1 complex, complex III, CIII), resulting in different assemblies (supercomplex SCI(1)III(2)IV(1) and megacomplex MCI(2)III(2)IV(2)) (By similarity). As a newly synthesized protein, rapidly incorporates into a multi-subunit assembly intermediate in the inner membrane, called MITRAC (mitochondrial translation regulation assembly intermediate of cytochrome c oxidase) complex, whose core components are COA3/MITRAC12 and COX14. Within the MITRAC complex, interacts with COA3 and with SMIM20/MITRAC7; the interaction with SMIM20 stabilizes the newly synthesized MT-CO1 and prevents its premature turnover. Interacts with TMEM177 in a COX20-dependent manner (By similarity).</text>
</comment>
<comment type="subcellular location">
    <subcellularLocation>
        <location evidence="2">Mitochondrion inner membrane</location>
        <topology evidence="2">Multi-pass membrane protein</topology>
    </subcellularLocation>
</comment>
<comment type="similarity">
    <text evidence="4">Belongs to the heme-copper respiratory oxidase family.</text>
</comment>
<gene>
    <name type="primary">MT-CO1</name>
    <name type="synonym">COI</name>
    <name type="synonym">COXI</name>
    <name type="synonym">MTCO1</name>
</gene>
<sequence length="515" mass="56961">MFVNRWLFSTNHKDIGTLYMIFGAWAGMVGTGLSILIRAELGQPGSLLGDDQIYNVVVTAHAFVMIFFMVMPIMIGGFGNWLVPLMIGAPDMAFPRMNNMSFWLLPPSFLLLLASSMVEAGAGTGWTVYPPLAGNLAHAGASVDLTIFSLHLAGVSSILGAINFITTIINMKPPAITQYQTPLFVWSVMITAVLLLLSLPVLAAGITMLLTDRNLNTTFFDPAGGGDPILYQHLFWFFGHPEVYILILPGFGMISHIVTYYSGKKEPFGYMGMVWAMMSIGFLGFIVWAHHMFTVGMDVDTRAYFTSATMIIAIPTGVKVFSWLATMNGGNIKWSPAMLWALGFIFLFTIGGLTGIVLSNSSLDIVLHDTYYVVAHFHYVLSMGAVFAIMGGFVHWFPLFTGYTLNDTWAKIHFTIMFVGVNLTFFPQHFLGLAGMPRRYSDYPDAYTTWNTISSMGSFISLTAVILMVFMIWEALASKRTVKSISLTSTNLEWIHGCPPPFHTFEEPAFIKSSH</sequence>
<feature type="chain" id="PRO_0000183372" description="Cytochrome c oxidase subunit 1">
    <location>
        <begin position="1"/>
        <end position="515"/>
    </location>
</feature>
<feature type="topological domain" description="Mitochondrial matrix" evidence="2">
    <location>
        <begin position="1"/>
        <end position="11"/>
    </location>
</feature>
<feature type="transmembrane region" description="Helical; Name=I" evidence="2">
    <location>
        <begin position="12"/>
        <end position="40"/>
    </location>
</feature>
<feature type="topological domain" description="Mitochondrial intermembrane" evidence="2">
    <location>
        <begin position="41"/>
        <end position="50"/>
    </location>
</feature>
<feature type="transmembrane region" description="Helical; Name=II" evidence="2">
    <location>
        <begin position="51"/>
        <end position="86"/>
    </location>
</feature>
<feature type="topological domain" description="Mitochondrial matrix" evidence="2">
    <location>
        <begin position="87"/>
        <end position="94"/>
    </location>
</feature>
<feature type="transmembrane region" description="Helical; Name=III" evidence="2">
    <location>
        <begin position="95"/>
        <end position="117"/>
    </location>
</feature>
<feature type="topological domain" description="Mitochondrial intermembrane" evidence="2">
    <location>
        <begin position="118"/>
        <end position="140"/>
    </location>
</feature>
<feature type="transmembrane region" description="Helical; Name=IV" evidence="2">
    <location>
        <begin position="141"/>
        <end position="170"/>
    </location>
</feature>
<feature type="topological domain" description="Mitochondrial matrix" evidence="2">
    <location>
        <begin position="171"/>
        <end position="182"/>
    </location>
</feature>
<feature type="transmembrane region" description="Helical; Name=V" evidence="2">
    <location>
        <begin position="183"/>
        <end position="212"/>
    </location>
</feature>
<feature type="topological domain" description="Mitochondrial intermembrane" evidence="2">
    <location>
        <begin position="213"/>
        <end position="227"/>
    </location>
</feature>
<feature type="transmembrane region" description="Helical; Name=VI" evidence="2">
    <location>
        <begin position="228"/>
        <end position="261"/>
    </location>
</feature>
<feature type="topological domain" description="Mitochondrial matrix" evidence="2">
    <location>
        <begin position="262"/>
        <end position="269"/>
    </location>
</feature>
<feature type="transmembrane region" description="Helical; Name=VII" evidence="2">
    <location>
        <begin position="270"/>
        <end position="286"/>
    </location>
</feature>
<feature type="topological domain" description="Mitochondrial intermembrane" evidence="2">
    <location>
        <begin position="287"/>
        <end position="298"/>
    </location>
</feature>
<feature type="transmembrane region" description="Helical; Name=VIII" evidence="2">
    <location>
        <begin position="299"/>
        <end position="327"/>
    </location>
</feature>
<feature type="topological domain" description="Mitochondrial matrix" evidence="2">
    <location>
        <begin position="328"/>
        <end position="335"/>
    </location>
</feature>
<feature type="transmembrane region" description="Helical; Name=IX" evidence="2">
    <location>
        <begin position="336"/>
        <end position="357"/>
    </location>
</feature>
<feature type="topological domain" description="Mitochondrial intermembrane" evidence="2">
    <location>
        <begin position="358"/>
        <end position="370"/>
    </location>
</feature>
<feature type="transmembrane region" description="Helical; Name=X" evidence="2">
    <location>
        <begin position="371"/>
        <end position="400"/>
    </location>
</feature>
<feature type="topological domain" description="Mitochondrial matrix" evidence="2">
    <location>
        <begin position="401"/>
        <end position="406"/>
    </location>
</feature>
<feature type="transmembrane region" description="Helical; Name=XI" evidence="2">
    <location>
        <begin position="407"/>
        <end position="433"/>
    </location>
</feature>
<feature type="topological domain" description="Mitochondrial intermembrane" evidence="2">
    <location>
        <begin position="434"/>
        <end position="446"/>
    </location>
</feature>
<feature type="transmembrane region" description="Helical; Name=XII" evidence="2">
    <location>
        <begin position="447"/>
        <end position="478"/>
    </location>
</feature>
<feature type="topological domain" description="Mitochondrial matrix" evidence="2">
    <location>
        <begin position="479"/>
        <end position="515"/>
    </location>
</feature>
<feature type="binding site" evidence="2">
    <location>
        <position position="40"/>
    </location>
    <ligand>
        <name>Na(+)</name>
        <dbReference type="ChEBI" id="CHEBI:29101"/>
    </ligand>
</feature>
<feature type="binding site" evidence="2">
    <location>
        <position position="45"/>
    </location>
    <ligand>
        <name>Na(+)</name>
        <dbReference type="ChEBI" id="CHEBI:29101"/>
    </ligand>
</feature>
<feature type="binding site" description="axial binding residue" evidence="2">
    <location>
        <position position="61"/>
    </location>
    <ligand>
        <name>Fe(II)-heme a</name>
        <dbReference type="ChEBI" id="CHEBI:61715"/>
        <note>low-spin</note>
    </ligand>
    <ligandPart>
        <name>Fe</name>
        <dbReference type="ChEBI" id="CHEBI:18248"/>
    </ligandPart>
</feature>
<feature type="binding site" evidence="2">
    <location>
        <position position="240"/>
    </location>
    <ligand>
        <name>Cu cation</name>
        <dbReference type="ChEBI" id="CHEBI:23378"/>
        <label>B</label>
    </ligand>
</feature>
<feature type="binding site" evidence="2">
    <location>
        <position position="244"/>
    </location>
    <ligand>
        <name>O2</name>
        <dbReference type="ChEBI" id="CHEBI:15379"/>
    </ligand>
</feature>
<feature type="binding site" evidence="2">
    <location>
        <position position="290"/>
    </location>
    <ligand>
        <name>Cu cation</name>
        <dbReference type="ChEBI" id="CHEBI:23378"/>
        <label>B</label>
    </ligand>
</feature>
<feature type="binding site" evidence="2">
    <location>
        <position position="291"/>
    </location>
    <ligand>
        <name>Cu cation</name>
        <dbReference type="ChEBI" id="CHEBI:23378"/>
        <label>B</label>
    </ligand>
</feature>
<feature type="binding site" evidence="2">
    <location>
        <position position="368"/>
    </location>
    <ligand>
        <name>Mg(2+)</name>
        <dbReference type="ChEBI" id="CHEBI:18420"/>
        <note>ligand shared with MT-CO2</note>
    </ligand>
</feature>
<feature type="binding site" evidence="2">
    <location>
        <position position="369"/>
    </location>
    <ligand>
        <name>Mg(2+)</name>
        <dbReference type="ChEBI" id="CHEBI:18420"/>
        <note>ligand shared with MT-CO2</note>
    </ligand>
</feature>
<feature type="binding site" description="axial binding residue" evidence="2">
    <location>
        <position position="376"/>
    </location>
    <ligand>
        <name>heme a3</name>
        <dbReference type="ChEBI" id="CHEBI:83282"/>
        <note>high-spin</note>
    </ligand>
    <ligandPart>
        <name>Fe</name>
        <dbReference type="ChEBI" id="CHEBI:18248"/>
    </ligandPart>
</feature>
<feature type="binding site" description="axial binding residue" evidence="2">
    <location>
        <position position="378"/>
    </location>
    <ligand>
        <name>Fe(II)-heme a</name>
        <dbReference type="ChEBI" id="CHEBI:61715"/>
        <note>low-spin</note>
    </ligand>
    <ligandPart>
        <name>Fe</name>
        <dbReference type="ChEBI" id="CHEBI:18248"/>
    </ligandPart>
</feature>
<feature type="binding site" evidence="2">
    <location>
        <position position="441"/>
    </location>
    <ligand>
        <name>Na(+)</name>
        <dbReference type="ChEBI" id="CHEBI:29101"/>
    </ligand>
</feature>
<feature type="cross-link" description="1'-histidyl-3'-tyrosine (His-Tyr)" evidence="2">
    <location>
        <begin position="240"/>
        <end position="244"/>
    </location>
</feature>
<dbReference type="EC" id="7.1.1.9"/>
<dbReference type="EMBL" id="AY331079">
    <property type="protein sequence ID" value="AAR02580.1"/>
    <property type="molecule type" value="Genomic_DNA"/>
</dbReference>
<dbReference type="SMR" id="Q6EGI5"/>
<dbReference type="UniPathway" id="UPA00705"/>
<dbReference type="GO" id="GO:0005743">
    <property type="term" value="C:mitochondrial inner membrane"/>
    <property type="evidence" value="ECO:0007669"/>
    <property type="project" value="UniProtKB-SubCell"/>
</dbReference>
<dbReference type="GO" id="GO:0045277">
    <property type="term" value="C:respiratory chain complex IV"/>
    <property type="evidence" value="ECO:0000250"/>
    <property type="project" value="UniProtKB"/>
</dbReference>
<dbReference type="GO" id="GO:0004129">
    <property type="term" value="F:cytochrome-c oxidase activity"/>
    <property type="evidence" value="ECO:0007669"/>
    <property type="project" value="UniProtKB-EC"/>
</dbReference>
<dbReference type="GO" id="GO:0020037">
    <property type="term" value="F:heme binding"/>
    <property type="evidence" value="ECO:0007669"/>
    <property type="project" value="InterPro"/>
</dbReference>
<dbReference type="GO" id="GO:0046872">
    <property type="term" value="F:metal ion binding"/>
    <property type="evidence" value="ECO:0007669"/>
    <property type="project" value="UniProtKB-KW"/>
</dbReference>
<dbReference type="GO" id="GO:0015990">
    <property type="term" value="P:electron transport coupled proton transport"/>
    <property type="evidence" value="ECO:0007669"/>
    <property type="project" value="TreeGrafter"/>
</dbReference>
<dbReference type="GO" id="GO:0006123">
    <property type="term" value="P:mitochondrial electron transport, cytochrome c to oxygen"/>
    <property type="evidence" value="ECO:0007669"/>
    <property type="project" value="TreeGrafter"/>
</dbReference>
<dbReference type="CDD" id="cd01663">
    <property type="entry name" value="Cyt_c_Oxidase_I"/>
    <property type="match status" value="1"/>
</dbReference>
<dbReference type="FunFam" id="1.20.210.10:FF:000001">
    <property type="entry name" value="Cytochrome c oxidase subunit 1"/>
    <property type="match status" value="1"/>
</dbReference>
<dbReference type="Gene3D" id="1.20.210.10">
    <property type="entry name" value="Cytochrome c oxidase-like, subunit I domain"/>
    <property type="match status" value="1"/>
</dbReference>
<dbReference type="InterPro" id="IPR023616">
    <property type="entry name" value="Cyt_c_oxase-like_su1_dom"/>
</dbReference>
<dbReference type="InterPro" id="IPR036927">
    <property type="entry name" value="Cyt_c_oxase-like_su1_sf"/>
</dbReference>
<dbReference type="InterPro" id="IPR000883">
    <property type="entry name" value="Cyt_C_Oxase_1"/>
</dbReference>
<dbReference type="InterPro" id="IPR023615">
    <property type="entry name" value="Cyt_c_Oxase_su1_BS"/>
</dbReference>
<dbReference type="InterPro" id="IPR033944">
    <property type="entry name" value="Cyt_c_oxase_su1_dom"/>
</dbReference>
<dbReference type="PANTHER" id="PTHR10422">
    <property type="entry name" value="CYTOCHROME C OXIDASE SUBUNIT 1"/>
    <property type="match status" value="1"/>
</dbReference>
<dbReference type="PANTHER" id="PTHR10422:SF18">
    <property type="entry name" value="CYTOCHROME C OXIDASE SUBUNIT 1"/>
    <property type="match status" value="1"/>
</dbReference>
<dbReference type="Pfam" id="PF00115">
    <property type="entry name" value="COX1"/>
    <property type="match status" value="1"/>
</dbReference>
<dbReference type="PRINTS" id="PR01165">
    <property type="entry name" value="CYCOXIDASEI"/>
</dbReference>
<dbReference type="SUPFAM" id="SSF81442">
    <property type="entry name" value="Cytochrome c oxidase subunit I-like"/>
    <property type="match status" value="1"/>
</dbReference>
<dbReference type="PROSITE" id="PS50855">
    <property type="entry name" value="COX1"/>
    <property type="match status" value="1"/>
</dbReference>
<dbReference type="PROSITE" id="PS00077">
    <property type="entry name" value="COX1_CUB"/>
    <property type="match status" value="1"/>
</dbReference>
<accession>Q6EGI5</accession>
<evidence type="ECO:0000250" key="1">
    <source>
        <dbReference type="UniProtKB" id="P00395"/>
    </source>
</evidence>
<evidence type="ECO:0000250" key="2">
    <source>
        <dbReference type="UniProtKB" id="P00396"/>
    </source>
</evidence>
<evidence type="ECO:0000250" key="3">
    <source>
        <dbReference type="UniProtKB" id="P00401"/>
    </source>
</evidence>
<evidence type="ECO:0000305" key="4"/>
<reference key="1">
    <citation type="journal article" date="2004" name="J. Mammal. Evol.">
        <title>DNA data support a rapid radiation of pocket gopher genera.</title>
        <authorList>
            <person name="Spradling T.A."/>
            <person name="Brant S.V."/>
            <person name="Hafner M.S."/>
            <person name="Dickerson C.J."/>
        </authorList>
    </citation>
    <scope>NUCLEOTIDE SEQUENCE [GENOMIC DNA]</scope>
</reference>
<protein>
    <recommendedName>
        <fullName>Cytochrome c oxidase subunit 1</fullName>
        <ecNumber>7.1.1.9</ecNumber>
    </recommendedName>
    <alternativeName>
        <fullName>Cytochrome c oxidase polypeptide I</fullName>
    </alternativeName>
</protein>
<proteinExistence type="inferred from homology"/>
<keyword id="KW-0106">Calcium</keyword>
<keyword id="KW-0186">Copper</keyword>
<keyword id="KW-0249">Electron transport</keyword>
<keyword id="KW-0349">Heme</keyword>
<keyword id="KW-0408">Iron</keyword>
<keyword id="KW-0460">Magnesium</keyword>
<keyword id="KW-0472">Membrane</keyword>
<keyword id="KW-0479">Metal-binding</keyword>
<keyword id="KW-0496">Mitochondrion</keyword>
<keyword id="KW-0999">Mitochondrion inner membrane</keyword>
<keyword id="KW-0679">Respiratory chain</keyword>
<keyword id="KW-0915">Sodium</keyword>
<keyword id="KW-1278">Translocase</keyword>
<keyword id="KW-0812">Transmembrane</keyword>
<keyword id="KW-1133">Transmembrane helix</keyword>
<keyword id="KW-0813">Transport</keyword>
<organism>
    <name type="scientific">Heterogeomys cherriei</name>
    <name type="common">Cherrie's pocket gopher</name>
    <name type="synonym">Orthogeomys cherriei</name>
    <dbReference type="NCBI Taxonomy" id="35663"/>
    <lineage>
        <taxon>Eukaryota</taxon>
        <taxon>Metazoa</taxon>
        <taxon>Chordata</taxon>
        <taxon>Craniata</taxon>
        <taxon>Vertebrata</taxon>
        <taxon>Euteleostomi</taxon>
        <taxon>Mammalia</taxon>
        <taxon>Eutheria</taxon>
        <taxon>Euarchontoglires</taxon>
        <taxon>Glires</taxon>
        <taxon>Rodentia</taxon>
        <taxon>Castorimorpha</taxon>
        <taxon>Geomyidae</taxon>
        <taxon>Heterogeomys</taxon>
    </lineage>
</organism>
<geneLocation type="mitochondrion"/>